<keyword id="KW-0240">DNA-directed RNA polymerase</keyword>
<keyword id="KW-0460">Magnesium</keyword>
<keyword id="KW-0479">Metal-binding</keyword>
<keyword id="KW-0548">Nucleotidyltransferase</keyword>
<keyword id="KW-1185">Reference proteome</keyword>
<keyword id="KW-0804">Transcription</keyword>
<keyword id="KW-0808">Transferase</keyword>
<keyword id="KW-0862">Zinc</keyword>
<gene>
    <name evidence="1" type="primary">rpoC</name>
    <name type="ordered locus">Abu_1883</name>
</gene>
<evidence type="ECO:0000255" key="1">
    <source>
        <dbReference type="HAMAP-Rule" id="MF_01322"/>
    </source>
</evidence>
<comment type="function">
    <text evidence="1">DNA-dependent RNA polymerase catalyzes the transcription of DNA into RNA using the four ribonucleoside triphosphates as substrates.</text>
</comment>
<comment type="catalytic activity">
    <reaction evidence="1">
        <text>RNA(n) + a ribonucleoside 5'-triphosphate = RNA(n+1) + diphosphate</text>
        <dbReference type="Rhea" id="RHEA:21248"/>
        <dbReference type="Rhea" id="RHEA-COMP:14527"/>
        <dbReference type="Rhea" id="RHEA-COMP:17342"/>
        <dbReference type="ChEBI" id="CHEBI:33019"/>
        <dbReference type="ChEBI" id="CHEBI:61557"/>
        <dbReference type="ChEBI" id="CHEBI:140395"/>
        <dbReference type="EC" id="2.7.7.6"/>
    </reaction>
</comment>
<comment type="cofactor">
    <cofactor evidence="1">
        <name>Mg(2+)</name>
        <dbReference type="ChEBI" id="CHEBI:18420"/>
    </cofactor>
    <text evidence="1">Binds 1 Mg(2+) ion per subunit.</text>
</comment>
<comment type="cofactor">
    <cofactor evidence="1">
        <name>Zn(2+)</name>
        <dbReference type="ChEBI" id="CHEBI:29105"/>
    </cofactor>
    <text evidence="1">Binds 2 Zn(2+) ions per subunit.</text>
</comment>
<comment type="subunit">
    <text evidence="1">The RNAP catalytic core consists of 2 alpha, 1 beta, 1 beta' and 1 omega subunit. When a sigma factor is associated with the core the holoenzyme is formed, which can initiate transcription.</text>
</comment>
<comment type="similarity">
    <text evidence="1">Belongs to the RNA polymerase beta' chain family.</text>
</comment>
<organism>
    <name type="scientific">Aliarcobacter butzleri (strain RM4018)</name>
    <name type="common">Arcobacter butzleri</name>
    <dbReference type="NCBI Taxonomy" id="367737"/>
    <lineage>
        <taxon>Bacteria</taxon>
        <taxon>Pseudomonadati</taxon>
        <taxon>Campylobacterota</taxon>
        <taxon>Epsilonproteobacteria</taxon>
        <taxon>Campylobacterales</taxon>
        <taxon>Arcobacteraceae</taxon>
        <taxon>Aliarcobacter</taxon>
    </lineage>
</organism>
<name>RPOC_ALIB4</name>
<proteinExistence type="inferred from homology"/>
<reference key="1">
    <citation type="journal article" date="2007" name="PLoS ONE">
        <title>The complete genome sequence and analysis of the Epsilonproteobacterium Arcobacter butzleri.</title>
        <authorList>
            <person name="Miller W.G."/>
            <person name="Parker C.T."/>
            <person name="Rubenfield M."/>
            <person name="Mendz G.L."/>
            <person name="Woesten M.M.S.M."/>
            <person name="Ussery D.W."/>
            <person name="Stolz J.F."/>
            <person name="Binnewies T.T."/>
            <person name="Hallin P.F."/>
            <person name="Wang G."/>
            <person name="Malek J.A."/>
            <person name="Rogosin A."/>
            <person name="Stanker L.H."/>
            <person name="Mandrell R.E."/>
        </authorList>
    </citation>
    <scope>NUCLEOTIDE SEQUENCE [LARGE SCALE GENOMIC DNA]</scope>
    <source>
        <strain>RM4018</strain>
    </source>
</reference>
<dbReference type="EC" id="2.7.7.6" evidence="1"/>
<dbReference type="EMBL" id="CP000361">
    <property type="protein sequence ID" value="ABV68116.1"/>
    <property type="molecule type" value="Genomic_DNA"/>
</dbReference>
<dbReference type="RefSeq" id="WP_012147822.1">
    <property type="nucleotide sequence ID" value="NC_009850.1"/>
</dbReference>
<dbReference type="SMR" id="A8EVZ3"/>
<dbReference type="STRING" id="367737.Abu_1883"/>
<dbReference type="GeneID" id="24305534"/>
<dbReference type="KEGG" id="abu:Abu_1883"/>
<dbReference type="eggNOG" id="COG0086">
    <property type="taxonomic scope" value="Bacteria"/>
</dbReference>
<dbReference type="HOGENOM" id="CLU_000524_3_1_7"/>
<dbReference type="Proteomes" id="UP000001136">
    <property type="component" value="Chromosome"/>
</dbReference>
<dbReference type="GO" id="GO:0000428">
    <property type="term" value="C:DNA-directed RNA polymerase complex"/>
    <property type="evidence" value="ECO:0007669"/>
    <property type="project" value="UniProtKB-KW"/>
</dbReference>
<dbReference type="GO" id="GO:0003677">
    <property type="term" value="F:DNA binding"/>
    <property type="evidence" value="ECO:0007669"/>
    <property type="project" value="UniProtKB-UniRule"/>
</dbReference>
<dbReference type="GO" id="GO:0003899">
    <property type="term" value="F:DNA-directed RNA polymerase activity"/>
    <property type="evidence" value="ECO:0007669"/>
    <property type="project" value="UniProtKB-UniRule"/>
</dbReference>
<dbReference type="GO" id="GO:0000287">
    <property type="term" value="F:magnesium ion binding"/>
    <property type="evidence" value="ECO:0007669"/>
    <property type="project" value="UniProtKB-UniRule"/>
</dbReference>
<dbReference type="GO" id="GO:0008270">
    <property type="term" value="F:zinc ion binding"/>
    <property type="evidence" value="ECO:0007669"/>
    <property type="project" value="UniProtKB-UniRule"/>
</dbReference>
<dbReference type="GO" id="GO:0006351">
    <property type="term" value="P:DNA-templated transcription"/>
    <property type="evidence" value="ECO:0007669"/>
    <property type="project" value="UniProtKB-UniRule"/>
</dbReference>
<dbReference type="CDD" id="cd02655">
    <property type="entry name" value="RNAP_beta'_C"/>
    <property type="match status" value="1"/>
</dbReference>
<dbReference type="CDD" id="cd01609">
    <property type="entry name" value="RNAP_beta'_N"/>
    <property type="match status" value="1"/>
</dbReference>
<dbReference type="FunFam" id="1.10.132.30:FF:000003">
    <property type="entry name" value="DNA-directed RNA polymerase subunit beta"/>
    <property type="match status" value="1"/>
</dbReference>
<dbReference type="Gene3D" id="1.10.132.30">
    <property type="match status" value="1"/>
</dbReference>
<dbReference type="Gene3D" id="1.10.150.390">
    <property type="match status" value="1"/>
</dbReference>
<dbReference type="Gene3D" id="1.10.1790.20">
    <property type="match status" value="1"/>
</dbReference>
<dbReference type="Gene3D" id="1.10.40.90">
    <property type="match status" value="1"/>
</dbReference>
<dbReference type="Gene3D" id="2.40.40.20">
    <property type="match status" value="1"/>
</dbReference>
<dbReference type="Gene3D" id="2.40.50.100">
    <property type="match status" value="3"/>
</dbReference>
<dbReference type="Gene3D" id="4.10.860.120">
    <property type="entry name" value="RNA polymerase II, clamp domain"/>
    <property type="match status" value="1"/>
</dbReference>
<dbReference type="Gene3D" id="1.10.274.100">
    <property type="entry name" value="RNA polymerase Rpb1, domain 3"/>
    <property type="match status" value="2"/>
</dbReference>
<dbReference type="HAMAP" id="MF_01322">
    <property type="entry name" value="RNApol_bact_RpoC"/>
    <property type="match status" value="1"/>
</dbReference>
<dbReference type="InterPro" id="IPR045867">
    <property type="entry name" value="DNA-dir_RpoC_beta_prime"/>
</dbReference>
<dbReference type="InterPro" id="IPR012754">
    <property type="entry name" value="DNA-dir_RpoC_beta_prime_bact"/>
</dbReference>
<dbReference type="InterPro" id="IPR000722">
    <property type="entry name" value="RNA_pol_asu"/>
</dbReference>
<dbReference type="InterPro" id="IPR006592">
    <property type="entry name" value="RNA_pol_N"/>
</dbReference>
<dbReference type="InterPro" id="IPR007080">
    <property type="entry name" value="RNA_pol_Rpb1_1"/>
</dbReference>
<dbReference type="InterPro" id="IPR007066">
    <property type="entry name" value="RNA_pol_Rpb1_3"/>
</dbReference>
<dbReference type="InterPro" id="IPR042102">
    <property type="entry name" value="RNA_pol_Rpb1_3_sf"/>
</dbReference>
<dbReference type="InterPro" id="IPR007083">
    <property type="entry name" value="RNA_pol_Rpb1_4"/>
</dbReference>
<dbReference type="InterPro" id="IPR007081">
    <property type="entry name" value="RNA_pol_Rpb1_5"/>
</dbReference>
<dbReference type="InterPro" id="IPR044893">
    <property type="entry name" value="RNA_pol_Rpb1_clamp_domain"/>
</dbReference>
<dbReference type="InterPro" id="IPR038120">
    <property type="entry name" value="Rpb1_funnel_sf"/>
</dbReference>
<dbReference type="NCBIfam" id="TIGR02386">
    <property type="entry name" value="rpoC_TIGR"/>
    <property type="match status" value="1"/>
</dbReference>
<dbReference type="PANTHER" id="PTHR19376">
    <property type="entry name" value="DNA-DIRECTED RNA POLYMERASE"/>
    <property type="match status" value="1"/>
</dbReference>
<dbReference type="PANTHER" id="PTHR19376:SF54">
    <property type="entry name" value="DNA-DIRECTED RNA POLYMERASE SUBUNIT BETA"/>
    <property type="match status" value="1"/>
</dbReference>
<dbReference type="Pfam" id="PF04997">
    <property type="entry name" value="RNA_pol_Rpb1_1"/>
    <property type="match status" value="1"/>
</dbReference>
<dbReference type="Pfam" id="PF00623">
    <property type="entry name" value="RNA_pol_Rpb1_2"/>
    <property type="match status" value="2"/>
</dbReference>
<dbReference type="Pfam" id="PF04983">
    <property type="entry name" value="RNA_pol_Rpb1_3"/>
    <property type="match status" value="1"/>
</dbReference>
<dbReference type="Pfam" id="PF05000">
    <property type="entry name" value="RNA_pol_Rpb1_4"/>
    <property type="match status" value="1"/>
</dbReference>
<dbReference type="Pfam" id="PF04998">
    <property type="entry name" value="RNA_pol_Rpb1_5"/>
    <property type="match status" value="1"/>
</dbReference>
<dbReference type="SMART" id="SM00663">
    <property type="entry name" value="RPOLA_N"/>
    <property type="match status" value="1"/>
</dbReference>
<dbReference type="SUPFAM" id="SSF64484">
    <property type="entry name" value="beta and beta-prime subunits of DNA dependent RNA-polymerase"/>
    <property type="match status" value="1"/>
</dbReference>
<sequence>MSNNEKVLSPIEIKELERPQDFSAFQLKLASPEKILSWSCGEVKKPETINYRTLKPERDGLFCAKIFGPVKDYECLCGKYKKMRYKGVVCEKCGVEVTSSKVRRHRMGHIELVSPVAHIWMVSSLPTRIGTLLGVKLKDLERVLYYEAYIVSNPGEAYYDNEKTKKVEKYDILNEEQYRTISDLFEHTGFEANMGGEIVRDLLAGLDLFELLTLLKEEMETTKSEAKRKTIIKRLKVVENFLNSGNRPEWMMLTQLPVLPPDLRPLVSLDGGKFAVSDVNDLYRRVINRNNRLKRLTELDAPEIIIRNEKRMLQEAVDALFDNGKTANAVKGANKRPLKSLSEIIKGKQGRFRQNLLGKRVDFSGRSVIVVGPSLNMDQCGIPKKMALELFKPHLMAKLEEKGYATTLKAAKRLIENESNEVWECLNEIVDEYPILLNRAPTLHKLSIQAFHPVLIDGKAIRLHPLVCAAFNADFDGDQMAVHVPLSQEAVAEAKILMMSSMNILLPASGRAIAVPSQDMILGIYYLSLVKEGVKGEHKLFTDVNEVKIALDMGQIDLHAKIRTRIGDRIIQTTVGRLIIHEILPSFVPANLWNKILKKKDIGILVDYIYKEAGYEVTPRFLDDLKNLGFKYATIAGISISIDDIRVPENKIMHISKSKKDVIEVQKQFSQGLLTEQERYNKIIDIWTEVNNKLASEMMELVKGDKNGFNSIYMMADSGARGSAAQIRQLSGMRGLMAKPDGSIIETPIISNFREGLNVLEYFISTHGARKGLADTALKTANAGYLTRKLIDVSQNVRITIEDCGTHEGIEITDITSGNELIESLEERITGRVIAEDIIDPISNEILFAEGTLITEEDAKVVTEAEVKSVVIRTPLTCKVENGLCSKCYGLNLGEQRKAKPGEAVGVVAAQSIGEPGTQLTLRTFHVGGTASATQTERELKADKEGFIRYYNIKKYVTTDGKIIVANRRNAGLLLVEPKINAPFKGKVTVETVHEEIILTIANSTEEKKYFLRKNDVAKANELAGISGKIEGKLYLPYKDGEEVNLNESIVEIIKDGWNVPNRIPFASELKVEDGAPVTSKIITGAKGIVKYYKLTGDYLERRHDIKAGDIITEKGLFAVIADTEDREALRHYISRGSCIALNDNTEVEKDTVISAPAKNEQVVIAEWDPYANPTIAEKAGVISFEDVIPGVTVSEQFDELTGTSKLVINEYIPSGYKPTVILTTDDNEIIRYSLDPKISLNVSEGKRVEVADIIGKTPKATQKSKDITGGLPRVSELFEARRPKNIAILASFDGVVSFGKGLRNKQKILITDSTGNSVEYLVEKSKQVLVHEGEFVHAGEALTDGQISPHDILRILGEKALHYFIVSEVQQVYRSQGVNIADKHIEVITSQMLRQVSILDGGDTKFIVGDMISKKKFKLENEKIIKLGGNPAIAEPLLLGITRAAVTSDSIISAASFQETTKVLTEAAISAKMDMLEDLKENVVIGRTIPVGTGLYKDQKVKFSEQEISK</sequence>
<accession>A8EVZ3</accession>
<feature type="chain" id="PRO_0000353289" description="DNA-directed RNA polymerase subunit beta'">
    <location>
        <begin position="1"/>
        <end position="1511"/>
    </location>
</feature>
<feature type="binding site" evidence="1">
    <location>
        <position position="75"/>
    </location>
    <ligand>
        <name>Zn(2+)</name>
        <dbReference type="ChEBI" id="CHEBI:29105"/>
        <label>1</label>
    </ligand>
</feature>
<feature type="binding site" evidence="1">
    <location>
        <position position="77"/>
    </location>
    <ligand>
        <name>Zn(2+)</name>
        <dbReference type="ChEBI" id="CHEBI:29105"/>
        <label>1</label>
    </ligand>
</feature>
<feature type="binding site" evidence="1">
    <location>
        <position position="90"/>
    </location>
    <ligand>
        <name>Zn(2+)</name>
        <dbReference type="ChEBI" id="CHEBI:29105"/>
        <label>1</label>
    </ligand>
</feature>
<feature type="binding site" evidence="1">
    <location>
        <position position="93"/>
    </location>
    <ligand>
        <name>Zn(2+)</name>
        <dbReference type="ChEBI" id="CHEBI:29105"/>
        <label>1</label>
    </ligand>
</feature>
<feature type="binding site" evidence="1">
    <location>
        <position position="474"/>
    </location>
    <ligand>
        <name>Mg(2+)</name>
        <dbReference type="ChEBI" id="CHEBI:18420"/>
    </ligand>
</feature>
<feature type="binding site" evidence="1">
    <location>
        <position position="476"/>
    </location>
    <ligand>
        <name>Mg(2+)</name>
        <dbReference type="ChEBI" id="CHEBI:18420"/>
    </ligand>
</feature>
<feature type="binding site" evidence="1">
    <location>
        <position position="478"/>
    </location>
    <ligand>
        <name>Mg(2+)</name>
        <dbReference type="ChEBI" id="CHEBI:18420"/>
    </ligand>
</feature>
<feature type="binding site" evidence="1">
    <location>
        <position position="804"/>
    </location>
    <ligand>
        <name>Zn(2+)</name>
        <dbReference type="ChEBI" id="CHEBI:29105"/>
        <label>2</label>
    </ligand>
</feature>
<feature type="binding site" evidence="1">
    <location>
        <position position="878"/>
    </location>
    <ligand>
        <name>Zn(2+)</name>
        <dbReference type="ChEBI" id="CHEBI:29105"/>
        <label>2</label>
    </ligand>
</feature>
<feature type="binding site" evidence="1">
    <location>
        <position position="885"/>
    </location>
    <ligand>
        <name>Zn(2+)</name>
        <dbReference type="ChEBI" id="CHEBI:29105"/>
        <label>2</label>
    </ligand>
</feature>
<feature type="binding site" evidence="1">
    <location>
        <position position="888"/>
    </location>
    <ligand>
        <name>Zn(2+)</name>
        <dbReference type="ChEBI" id="CHEBI:29105"/>
        <label>2</label>
    </ligand>
</feature>
<protein>
    <recommendedName>
        <fullName evidence="1">DNA-directed RNA polymerase subunit beta'</fullName>
        <shortName evidence="1">RNAP subunit beta'</shortName>
        <ecNumber evidence="1">2.7.7.6</ecNumber>
    </recommendedName>
    <alternativeName>
        <fullName evidence="1">RNA polymerase subunit beta'</fullName>
    </alternativeName>
    <alternativeName>
        <fullName evidence="1">Transcriptase subunit beta'</fullName>
    </alternativeName>
</protein>